<gene>
    <name type="primary">LRRFIP2</name>
</gene>
<protein>
    <recommendedName>
        <fullName>Leucine-rich repeat flightless-interacting protein 2</fullName>
        <shortName>LRR FLII-interacting protein 2</shortName>
    </recommendedName>
</protein>
<accession>Q2T9W6</accession>
<keyword id="KW-0175">Coiled coil</keyword>
<keyword id="KW-0597">Phosphoprotein</keyword>
<keyword id="KW-1185">Reference proteome</keyword>
<keyword id="KW-0879">Wnt signaling pathway</keyword>
<reference key="1">
    <citation type="submission" date="2005-12" db="EMBL/GenBank/DDBJ databases">
        <authorList>
            <consortium name="NIH - Mammalian Gene Collection (MGC) project"/>
        </authorList>
    </citation>
    <scope>NUCLEOTIDE SEQUENCE [LARGE SCALE MRNA]</scope>
    <source>
        <strain>Crossbred X Angus</strain>
        <tissue>Liver</tissue>
    </source>
</reference>
<comment type="function">
    <text evidence="1">May function as activator of the canonical Wnt signaling pathway, in association with DVL3, upstream of CTNNB1/beta-catenin. Positively regulates Toll-like receptor (TLR) signaling in response to agonist probably by competing with the negative FLII regulator for MYD88-binding (By similarity).</text>
</comment>
<comment type="subunit">
    <text evidence="1">Interacts with DVL3 and FLII (By similarity). Weakly interacts with MYD88 in resting cells (By similarity). Following LPS-stimulation, the interaction with MYD88 is rapidly enhanced; the complex gradually dissociates to basal levels after 6 hours of stimulation (By similarity). Interaction with MYD88 is regulated by LPS-induced phosphorylation. In the presence of LPS, competes with FLII for MYD88-binding (By similarity).</text>
</comment>
<comment type="similarity">
    <text evidence="6">Belongs to the LRRFIP family.</text>
</comment>
<proteinExistence type="evidence at transcript level"/>
<organism>
    <name type="scientific">Bos taurus</name>
    <name type="common">Bovine</name>
    <dbReference type="NCBI Taxonomy" id="9913"/>
    <lineage>
        <taxon>Eukaryota</taxon>
        <taxon>Metazoa</taxon>
        <taxon>Chordata</taxon>
        <taxon>Craniata</taxon>
        <taxon>Vertebrata</taxon>
        <taxon>Euteleostomi</taxon>
        <taxon>Mammalia</taxon>
        <taxon>Eutheria</taxon>
        <taxon>Laurasiatheria</taxon>
        <taxon>Artiodactyla</taxon>
        <taxon>Ruminantia</taxon>
        <taxon>Pecora</taxon>
        <taxon>Bovidae</taxon>
        <taxon>Bovinae</taxon>
        <taxon>Bos</taxon>
    </lineage>
</organism>
<feature type="chain" id="PRO_0000245245" description="Leucine-rich repeat flightless-interacting protein 2">
    <location>
        <begin position="1"/>
        <end position="400"/>
    </location>
</feature>
<feature type="region of interest" description="Disordered" evidence="5">
    <location>
        <begin position="1"/>
        <end position="28"/>
    </location>
</feature>
<feature type="region of interest" description="Disordered" evidence="5">
    <location>
        <begin position="53"/>
        <end position="119"/>
    </location>
</feature>
<feature type="coiled-coil region" evidence="4">
    <location>
        <begin position="29"/>
        <end position="71"/>
    </location>
</feature>
<feature type="coiled-coil region" evidence="4">
    <location>
        <begin position="106"/>
        <end position="202"/>
    </location>
</feature>
<feature type="coiled-coil region" evidence="4">
    <location>
        <begin position="245"/>
        <end position="393"/>
    </location>
</feature>
<feature type="compositionally biased region" description="Basic and acidic residues" evidence="5">
    <location>
        <begin position="53"/>
        <end position="68"/>
    </location>
</feature>
<feature type="compositionally biased region" description="Polar residues" evidence="5">
    <location>
        <begin position="73"/>
        <end position="102"/>
    </location>
</feature>
<feature type="modified residue" description="Phosphoserine" evidence="3">
    <location>
        <position position="18"/>
    </location>
</feature>
<feature type="modified residue" description="Phosphoserine" evidence="3">
    <location>
        <position position="77"/>
    </location>
</feature>
<feature type="modified residue" description="Phosphoserine" evidence="3">
    <location>
        <position position="80"/>
    </location>
</feature>
<feature type="modified residue" description="Phosphoserine" evidence="3">
    <location>
        <position position="88"/>
    </location>
</feature>
<feature type="modified residue" description="Phosphoserine" evidence="3">
    <location>
        <position position="92"/>
    </location>
</feature>
<feature type="modified residue" description="Phosphoserine" evidence="3">
    <location>
        <position position="96"/>
    </location>
</feature>
<feature type="modified residue" description="Phosphothreonine" evidence="2">
    <location>
        <position position="99"/>
    </location>
</feature>
<feature type="modified residue" description="Phosphoserine" evidence="2">
    <location>
        <position position="100"/>
    </location>
</feature>
<feature type="modified residue" description="Phosphoserine" evidence="2">
    <location>
        <position position="101"/>
    </location>
</feature>
<dbReference type="EMBL" id="BC111234">
    <property type="protein sequence ID" value="AAI11235.1"/>
    <property type="molecule type" value="mRNA"/>
</dbReference>
<dbReference type="RefSeq" id="NP_001033159.1">
    <property type="nucleotide sequence ID" value="NM_001038070.2"/>
</dbReference>
<dbReference type="SMR" id="Q2T9W6"/>
<dbReference type="FunCoup" id="Q2T9W6">
    <property type="interactions" value="205"/>
</dbReference>
<dbReference type="STRING" id="9913.ENSBTAP00000071976"/>
<dbReference type="GeneID" id="510368"/>
<dbReference type="KEGG" id="bta:510368"/>
<dbReference type="CTD" id="9209"/>
<dbReference type="InParanoid" id="Q2T9W6"/>
<dbReference type="OrthoDB" id="10028421at2759"/>
<dbReference type="Proteomes" id="UP000009136">
    <property type="component" value="Unplaced"/>
</dbReference>
<dbReference type="GO" id="GO:0006355">
    <property type="term" value="P:regulation of DNA-templated transcription"/>
    <property type="evidence" value="ECO:0007669"/>
    <property type="project" value="InterPro"/>
</dbReference>
<dbReference type="GO" id="GO:0016055">
    <property type="term" value="P:Wnt signaling pathway"/>
    <property type="evidence" value="ECO:0007669"/>
    <property type="project" value="UniProtKB-KW"/>
</dbReference>
<dbReference type="FunFam" id="1.20.5.4090:FF:000001">
    <property type="entry name" value="leucine-rich repeat flightless-interacting protein 2 isoform X1"/>
    <property type="match status" value="1"/>
</dbReference>
<dbReference type="Gene3D" id="1.20.5.4090">
    <property type="match status" value="1"/>
</dbReference>
<dbReference type="InterPro" id="IPR019139">
    <property type="entry name" value="LRRFIP1/2"/>
</dbReference>
<dbReference type="PANTHER" id="PTHR19212">
    <property type="entry name" value="LEUCINE RICH REPEAT IN FLII INTERACTING PROTEIN"/>
    <property type="match status" value="1"/>
</dbReference>
<dbReference type="PANTHER" id="PTHR19212:SF6">
    <property type="entry name" value="LEUCINE-RICH REPEAT FLIGHTLESS-INTERACTING PROTEIN 2"/>
    <property type="match status" value="1"/>
</dbReference>
<dbReference type="Pfam" id="PF09738">
    <property type="entry name" value="LRRFIP"/>
    <property type="match status" value="1"/>
</dbReference>
<evidence type="ECO:0000250" key="1"/>
<evidence type="ECO:0000250" key="2">
    <source>
        <dbReference type="UniProtKB" id="Q91WK0"/>
    </source>
</evidence>
<evidence type="ECO:0000250" key="3">
    <source>
        <dbReference type="UniProtKB" id="Q9Y608"/>
    </source>
</evidence>
<evidence type="ECO:0000255" key="4"/>
<evidence type="ECO:0000256" key="5">
    <source>
        <dbReference type="SAM" id="MobiDB-lite"/>
    </source>
</evidence>
<evidence type="ECO:0000305" key="6"/>
<sequence length="400" mass="45494">MGTPGSGRKRTPVKDRFSAEDEALSNIDREAEARLAAKRAARAEARDIRMRELERQQKELDEKSDKQYAENYTRPSSRNSASATTPLSGNSSRRVSGDTSSLIDPDTSLSELRESLSEVEEKYKKAMVSNAQLDNEKNNLIYQVDTLKDVIEEQEEQMAEFYRENEEKSKELERQKHMCSVLQHKMDELKEGLRQRDELIEKHGLVIIPDGTPNGDVHQEPAVGAITVVSQEAAQVLESAGEGPLDVRLRKLAGEKEELLSQIRKLKLQLEEERQKCSGRDGTAGDLAELQNGSDLQLIEMQRDANRQISEYKFKLSKAEQDITTLEQSISRLEGQVLRYRTAAENAEKVEDELKAEKRKLQRELRTALDKIEEMEMTNSHLAKRLEKMKANRTALLAQQ</sequence>
<name>LRRF2_BOVIN</name>